<gene>
    <name evidence="1" type="primary">rpsS</name>
    <name type="ordered locus">VSAL_I0324</name>
</gene>
<reference key="1">
    <citation type="journal article" date="2008" name="BMC Genomics">
        <title>The genome sequence of the fish pathogen Aliivibrio salmonicida strain LFI1238 shows extensive evidence of gene decay.</title>
        <authorList>
            <person name="Hjerde E."/>
            <person name="Lorentzen M.S."/>
            <person name="Holden M.T."/>
            <person name="Seeger K."/>
            <person name="Paulsen S."/>
            <person name="Bason N."/>
            <person name="Churcher C."/>
            <person name="Harris D."/>
            <person name="Norbertczak H."/>
            <person name="Quail M.A."/>
            <person name="Sanders S."/>
            <person name="Thurston S."/>
            <person name="Parkhill J."/>
            <person name="Willassen N.P."/>
            <person name="Thomson N.R."/>
        </authorList>
    </citation>
    <scope>NUCLEOTIDE SEQUENCE [LARGE SCALE GENOMIC DNA]</scope>
    <source>
        <strain>LFI1238</strain>
    </source>
</reference>
<feature type="chain" id="PRO_1000127921" description="Small ribosomal subunit protein uS19">
    <location>
        <begin position="1"/>
        <end position="92"/>
    </location>
</feature>
<sequence length="92" mass="10484">MPRSLKKGPFIDLHLLKKVEKAVESGDKKPIKTWSRRSMIIPTMINLTIAVHNGRQHVPVFVTEDMIGHKLGEFAPTRTYRGHAADKKAKKR</sequence>
<organism>
    <name type="scientific">Aliivibrio salmonicida (strain LFI1238)</name>
    <name type="common">Vibrio salmonicida (strain LFI1238)</name>
    <dbReference type="NCBI Taxonomy" id="316275"/>
    <lineage>
        <taxon>Bacteria</taxon>
        <taxon>Pseudomonadati</taxon>
        <taxon>Pseudomonadota</taxon>
        <taxon>Gammaproteobacteria</taxon>
        <taxon>Vibrionales</taxon>
        <taxon>Vibrionaceae</taxon>
        <taxon>Aliivibrio</taxon>
    </lineage>
</organism>
<name>RS19_ALISL</name>
<evidence type="ECO:0000255" key="1">
    <source>
        <dbReference type="HAMAP-Rule" id="MF_00531"/>
    </source>
</evidence>
<evidence type="ECO:0000305" key="2"/>
<protein>
    <recommendedName>
        <fullName evidence="1">Small ribosomal subunit protein uS19</fullName>
    </recommendedName>
    <alternativeName>
        <fullName evidence="2">30S ribosomal protein S19</fullName>
    </alternativeName>
</protein>
<proteinExistence type="inferred from homology"/>
<dbReference type="EMBL" id="FM178379">
    <property type="protein sequence ID" value="CAQ78009.1"/>
    <property type="molecule type" value="Genomic_DNA"/>
</dbReference>
<dbReference type="RefSeq" id="WP_012549154.1">
    <property type="nucleotide sequence ID" value="NC_011312.1"/>
</dbReference>
<dbReference type="SMR" id="B6EPS9"/>
<dbReference type="GeneID" id="56276451"/>
<dbReference type="KEGG" id="vsa:VSAL_I0324"/>
<dbReference type="eggNOG" id="COG0185">
    <property type="taxonomic scope" value="Bacteria"/>
</dbReference>
<dbReference type="HOGENOM" id="CLU_144911_0_1_6"/>
<dbReference type="Proteomes" id="UP000001730">
    <property type="component" value="Chromosome 1"/>
</dbReference>
<dbReference type="GO" id="GO:0005737">
    <property type="term" value="C:cytoplasm"/>
    <property type="evidence" value="ECO:0007669"/>
    <property type="project" value="UniProtKB-ARBA"/>
</dbReference>
<dbReference type="GO" id="GO:0015935">
    <property type="term" value="C:small ribosomal subunit"/>
    <property type="evidence" value="ECO:0007669"/>
    <property type="project" value="InterPro"/>
</dbReference>
<dbReference type="GO" id="GO:0019843">
    <property type="term" value="F:rRNA binding"/>
    <property type="evidence" value="ECO:0007669"/>
    <property type="project" value="UniProtKB-UniRule"/>
</dbReference>
<dbReference type="GO" id="GO:0003735">
    <property type="term" value="F:structural constituent of ribosome"/>
    <property type="evidence" value="ECO:0007669"/>
    <property type="project" value="InterPro"/>
</dbReference>
<dbReference type="GO" id="GO:0000028">
    <property type="term" value="P:ribosomal small subunit assembly"/>
    <property type="evidence" value="ECO:0007669"/>
    <property type="project" value="TreeGrafter"/>
</dbReference>
<dbReference type="GO" id="GO:0006412">
    <property type="term" value="P:translation"/>
    <property type="evidence" value="ECO:0007669"/>
    <property type="project" value="UniProtKB-UniRule"/>
</dbReference>
<dbReference type="FunFam" id="3.30.860.10:FF:000001">
    <property type="entry name" value="30S ribosomal protein S19"/>
    <property type="match status" value="1"/>
</dbReference>
<dbReference type="Gene3D" id="3.30.860.10">
    <property type="entry name" value="30s Ribosomal Protein S19, Chain A"/>
    <property type="match status" value="1"/>
</dbReference>
<dbReference type="HAMAP" id="MF_00531">
    <property type="entry name" value="Ribosomal_uS19"/>
    <property type="match status" value="1"/>
</dbReference>
<dbReference type="InterPro" id="IPR002222">
    <property type="entry name" value="Ribosomal_uS19"/>
</dbReference>
<dbReference type="InterPro" id="IPR005732">
    <property type="entry name" value="Ribosomal_uS19_bac-type"/>
</dbReference>
<dbReference type="InterPro" id="IPR020934">
    <property type="entry name" value="Ribosomal_uS19_CS"/>
</dbReference>
<dbReference type="InterPro" id="IPR023575">
    <property type="entry name" value="Ribosomal_uS19_SF"/>
</dbReference>
<dbReference type="NCBIfam" id="TIGR01050">
    <property type="entry name" value="rpsS_bact"/>
    <property type="match status" value="1"/>
</dbReference>
<dbReference type="PANTHER" id="PTHR11880">
    <property type="entry name" value="RIBOSOMAL PROTEIN S19P FAMILY MEMBER"/>
    <property type="match status" value="1"/>
</dbReference>
<dbReference type="PANTHER" id="PTHR11880:SF8">
    <property type="entry name" value="SMALL RIBOSOMAL SUBUNIT PROTEIN US19M"/>
    <property type="match status" value="1"/>
</dbReference>
<dbReference type="Pfam" id="PF00203">
    <property type="entry name" value="Ribosomal_S19"/>
    <property type="match status" value="1"/>
</dbReference>
<dbReference type="PIRSF" id="PIRSF002144">
    <property type="entry name" value="Ribosomal_S19"/>
    <property type="match status" value="1"/>
</dbReference>
<dbReference type="PRINTS" id="PR00975">
    <property type="entry name" value="RIBOSOMALS19"/>
</dbReference>
<dbReference type="SUPFAM" id="SSF54570">
    <property type="entry name" value="Ribosomal protein S19"/>
    <property type="match status" value="1"/>
</dbReference>
<dbReference type="PROSITE" id="PS00323">
    <property type="entry name" value="RIBOSOMAL_S19"/>
    <property type="match status" value="1"/>
</dbReference>
<keyword id="KW-0687">Ribonucleoprotein</keyword>
<keyword id="KW-0689">Ribosomal protein</keyword>
<keyword id="KW-0694">RNA-binding</keyword>
<keyword id="KW-0699">rRNA-binding</keyword>
<accession>B6EPS9</accession>
<comment type="function">
    <text evidence="1">Protein S19 forms a complex with S13 that binds strongly to the 16S ribosomal RNA.</text>
</comment>
<comment type="similarity">
    <text evidence="1">Belongs to the universal ribosomal protein uS19 family.</text>
</comment>